<sequence length="122" mass="14403">MVRIAGRELPTNKRVDIALNYIYGIGPWRSRQILKELKVDFSTRVKDLLVGEIAAIREYIERNYVVESDLRRFELLNIKRLIEINSYKGKRHKMLLPVRGQRTRTNARTRRGVKRIIDLKGV</sequence>
<dbReference type="EMBL" id="AF022186">
    <property type="protein sequence ID" value="AAF12926.1"/>
    <property type="molecule type" value="Genomic_DNA"/>
</dbReference>
<dbReference type="RefSeq" id="NP_045168.1">
    <property type="nucleotide sequence ID" value="NC_001840.1"/>
</dbReference>
<dbReference type="SMR" id="Q9TLV0"/>
<dbReference type="GeneID" id="800181"/>
<dbReference type="GO" id="GO:0009507">
    <property type="term" value="C:chloroplast"/>
    <property type="evidence" value="ECO:0007669"/>
    <property type="project" value="UniProtKB-SubCell"/>
</dbReference>
<dbReference type="GO" id="GO:0005829">
    <property type="term" value="C:cytosol"/>
    <property type="evidence" value="ECO:0007669"/>
    <property type="project" value="TreeGrafter"/>
</dbReference>
<dbReference type="GO" id="GO:0015935">
    <property type="term" value="C:small ribosomal subunit"/>
    <property type="evidence" value="ECO:0007669"/>
    <property type="project" value="TreeGrafter"/>
</dbReference>
<dbReference type="GO" id="GO:0019843">
    <property type="term" value="F:rRNA binding"/>
    <property type="evidence" value="ECO:0007669"/>
    <property type="project" value="UniProtKB-UniRule"/>
</dbReference>
<dbReference type="GO" id="GO:0003735">
    <property type="term" value="F:structural constituent of ribosome"/>
    <property type="evidence" value="ECO:0007669"/>
    <property type="project" value="InterPro"/>
</dbReference>
<dbReference type="GO" id="GO:0006412">
    <property type="term" value="P:translation"/>
    <property type="evidence" value="ECO:0007669"/>
    <property type="project" value="UniProtKB-UniRule"/>
</dbReference>
<dbReference type="FunFam" id="1.10.8.50:FF:000001">
    <property type="entry name" value="30S ribosomal protein S13"/>
    <property type="match status" value="1"/>
</dbReference>
<dbReference type="Gene3D" id="1.10.8.50">
    <property type="match status" value="1"/>
</dbReference>
<dbReference type="Gene3D" id="4.10.910.10">
    <property type="entry name" value="30s ribosomal protein s13, domain 2"/>
    <property type="match status" value="1"/>
</dbReference>
<dbReference type="HAMAP" id="MF_01315">
    <property type="entry name" value="Ribosomal_uS13"/>
    <property type="match status" value="1"/>
</dbReference>
<dbReference type="InterPro" id="IPR027437">
    <property type="entry name" value="Rbsml_uS13_C"/>
</dbReference>
<dbReference type="InterPro" id="IPR001892">
    <property type="entry name" value="Ribosomal_uS13"/>
</dbReference>
<dbReference type="InterPro" id="IPR010979">
    <property type="entry name" value="Ribosomal_uS13-like_H2TH"/>
</dbReference>
<dbReference type="InterPro" id="IPR019980">
    <property type="entry name" value="Ribosomal_uS13_bac-type"/>
</dbReference>
<dbReference type="InterPro" id="IPR018269">
    <property type="entry name" value="Ribosomal_uS13_CS"/>
</dbReference>
<dbReference type="NCBIfam" id="TIGR03631">
    <property type="entry name" value="uS13_bact"/>
    <property type="match status" value="1"/>
</dbReference>
<dbReference type="PANTHER" id="PTHR10871">
    <property type="entry name" value="30S RIBOSOMAL PROTEIN S13/40S RIBOSOMAL PROTEIN S18"/>
    <property type="match status" value="1"/>
</dbReference>
<dbReference type="PANTHER" id="PTHR10871:SF1">
    <property type="entry name" value="SMALL RIBOSOMAL SUBUNIT PROTEIN US13M"/>
    <property type="match status" value="1"/>
</dbReference>
<dbReference type="Pfam" id="PF00416">
    <property type="entry name" value="Ribosomal_S13"/>
    <property type="match status" value="1"/>
</dbReference>
<dbReference type="PIRSF" id="PIRSF002134">
    <property type="entry name" value="Ribosomal_S13"/>
    <property type="match status" value="1"/>
</dbReference>
<dbReference type="SUPFAM" id="SSF46946">
    <property type="entry name" value="S13-like H2TH domain"/>
    <property type="match status" value="1"/>
</dbReference>
<dbReference type="PROSITE" id="PS00646">
    <property type="entry name" value="RIBOSOMAL_S13_1"/>
    <property type="match status" value="1"/>
</dbReference>
<dbReference type="PROSITE" id="PS50159">
    <property type="entry name" value="RIBOSOMAL_S13_2"/>
    <property type="match status" value="1"/>
</dbReference>
<keyword id="KW-0150">Chloroplast</keyword>
<keyword id="KW-0934">Plastid</keyword>
<keyword id="KW-0687">Ribonucleoprotein</keyword>
<keyword id="KW-0689">Ribosomal protein</keyword>
<keyword id="KW-0694">RNA-binding</keyword>
<keyword id="KW-0699">rRNA-binding</keyword>
<accession>Q9TLV0</accession>
<feature type="chain" id="PRO_0000132195" description="Small ribosomal subunit protein uS13c">
    <location>
        <begin position="1"/>
        <end position="122"/>
    </location>
</feature>
<geneLocation type="chloroplast"/>
<name>RR13_CYACA</name>
<proteinExistence type="inferred from homology"/>
<protein>
    <recommendedName>
        <fullName evidence="1">Small ribosomal subunit protein uS13c</fullName>
    </recommendedName>
    <alternativeName>
        <fullName evidence="2">30S ribosomal protein S13, chloroplastic</fullName>
    </alternativeName>
</protein>
<comment type="function">
    <text evidence="1">Located at the top of the head of the 30S subunit, it contacts several helices of the 16S rRNA.</text>
</comment>
<comment type="subunit">
    <text>Part of the 30S ribosomal subunit.</text>
</comment>
<comment type="subcellular location">
    <subcellularLocation>
        <location>Plastid</location>
        <location>Chloroplast</location>
    </subcellularLocation>
</comment>
<comment type="similarity">
    <text evidence="1">Belongs to the universal ribosomal protein uS13 family.</text>
</comment>
<reference key="1">
    <citation type="journal article" date="2000" name="J. Mol. Evol.">
        <title>The structure and gene repertoire of an ancient red algal plastid genome.</title>
        <authorList>
            <person name="Gloeckner G."/>
            <person name="Rosenthal A."/>
            <person name="Valentin K.-U."/>
        </authorList>
    </citation>
    <scope>NUCLEOTIDE SEQUENCE [LARGE SCALE GENOMIC DNA]</scope>
    <source>
        <strain>RK-1</strain>
    </source>
</reference>
<organism>
    <name type="scientific">Cyanidium caldarium</name>
    <name type="common">Red alga</name>
    <dbReference type="NCBI Taxonomy" id="2771"/>
    <lineage>
        <taxon>Eukaryota</taxon>
        <taxon>Rhodophyta</taxon>
        <taxon>Bangiophyceae</taxon>
        <taxon>Cyanidiales</taxon>
        <taxon>Cyanidiaceae</taxon>
        <taxon>Cyanidium</taxon>
    </lineage>
</organism>
<gene>
    <name evidence="1" type="primary">rps13</name>
</gene>
<evidence type="ECO:0000255" key="1">
    <source>
        <dbReference type="HAMAP-Rule" id="MF_01315"/>
    </source>
</evidence>
<evidence type="ECO:0000305" key="2"/>